<comment type="function">
    <text evidence="2">A cytochrome P450 monooxygenase involved in the metabolism of fatty acids. Mechanistically, uses molecular oxygen inserting one oxygen atom into a substrate, and reducing the second into a water molecule, with two electrons provided by NADPH via cytochrome P450 reductase (NADPH--hemoprotein reductase). Catalyzes the hydroxylation of carbon-hydrogen bonds. Hydroxylates fatty acids specifically at the omega-1 position displaying the highest catalytic activity for saturated fatty acids. May be involved in the oxidative metabolism of xenobiotics.</text>
</comment>
<comment type="catalytic activity">
    <reaction evidence="2">
        <text>an organic molecule + reduced [NADPH--hemoprotein reductase] + O2 = an alcohol + oxidized [NADPH--hemoprotein reductase] + H2O + H(+)</text>
        <dbReference type="Rhea" id="RHEA:17149"/>
        <dbReference type="Rhea" id="RHEA-COMP:11964"/>
        <dbReference type="Rhea" id="RHEA-COMP:11965"/>
        <dbReference type="ChEBI" id="CHEBI:15377"/>
        <dbReference type="ChEBI" id="CHEBI:15378"/>
        <dbReference type="ChEBI" id="CHEBI:15379"/>
        <dbReference type="ChEBI" id="CHEBI:30879"/>
        <dbReference type="ChEBI" id="CHEBI:57618"/>
        <dbReference type="ChEBI" id="CHEBI:58210"/>
        <dbReference type="ChEBI" id="CHEBI:142491"/>
        <dbReference type="EC" id="1.14.14.1"/>
    </reaction>
    <physiologicalReaction direction="left-to-right" evidence="2">
        <dbReference type="Rhea" id="RHEA:17150"/>
    </physiologicalReaction>
</comment>
<comment type="catalytic activity">
    <reaction evidence="2">
        <text>(5Z,8Z,11Z)-eicosatrienoate + reduced [NADPH--hemoprotein reductase] + O2 = 19-hydroxy-(5Z,8Z,11Z)-eicosatrienoate + oxidized [NADPH--hemoprotein reductase] + H2O + H(+)</text>
        <dbReference type="Rhea" id="RHEA:50076"/>
        <dbReference type="Rhea" id="RHEA-COMP:11964"/>
        <dbReference type="Rhea" id="RHEA-COMP:11965"/>
        <dbReference type="ChEBI" id="CHEBI:15377"/>
        <dbReference type="ChEBI" id="CHEBI:15378"/>
        <dbReference type="ChEBI" id="CHEBI:15379"/>
        <dbReference type="ChEBI" id="CHEBI:57618"/>
        <dbReference type="ChEBI" id="CHEBI:58210"/>
        <dbReference type="ChEBI" id="CHEBI:78043"/>
        <dbReference type="ChEBI" id="CHEBI:132024"/>
    </reaction>
    <physiologicalReaction direction="left-to-right" evidence="2">
        <dbReference type="Rhea" id="RHEA:50077"/>
    </physiologicalReaction>
</comment>
<comment type="catalytic activity">
    <reaction evidence="2">
        <text>(5Z,8Z,11Z,14Z,17Z)-eicosapentaenoate + reduced [NADPH--hemoprotein reductase] + O2 = 19-hydroxy-(5Z,8Z,11Z,14Z,17Z)-eicosapentaenoate + oxidized [NADPH--hemoprotein reductase] + H2O + H(+)</text>
        <dbReference type="Rhea" id="RHEA:39787"/>
        <dbReference type="Rhea" id="RHEA-COMP:11964"/>
        <dbReference type="Rhea" id="RHEA-COMP:11965"/>
        <dbReference type="ChEBI" id="CHEBI:15377"/>
        <dbReference type="ChEBI" id="CHEBI:15378"/>
        <dbReference type="ChEBI" id="CHEBI:15379"/>
        <dbReference type="ChEBI" id="CHEBI:57618"/>
        <dbReference type="ChEBI" id="CHEBI:58210"/>
        <dbReference type="ChEBI" id="CHEBI:58562"/>
        <dbReference type="ChEBI" id="CHEBI:76636"/>
    </reaction>
    <physiologicalReaction direction="left-to-right" evidence="2">
        <dbReference type="Rhea" id="RHEA:39788"/>
    </physiologicalReaction>
</comment>
<comment type="catalytic activity">
    <reaction evidence="2">
        <text>(4Z,7Z,10Z,13Z,16Z,19Z)-docosahexaenoate + reduced [NADPH--hemoprotein reductase] + O2 = 21-hydroxy-(4Z,7Z,10Z,13Z,16Z,19Z)-docosahexaenoate + oxidized [NADPH--hemoprotein reductase] + H2O + H(+)</text>
        <dbReference type="Rhea" id="RHEA:50088"/>
        <dbReference type="Rhea" id="RHEA-COMP:11964"/>
        <dbReference type="Rhea" id="RHEA-COMP:11965"/>
        <dbReference type="ChEBI" id="CHEBI:15377"/>
        <dbReference type="ChEBI" id="CHEBI:15378"/>
        <dbReference type="ChEBI" id="CHEBI:15379"/>
        <dbReference type="ChEBI" id="CHEBI:57618"/>
        <dbReference type="ChEBI" id="CHEBI:58210"/>
        <dbReference type="ChEBI" id="CHEBI:77016"/>
        <dbReference type="ChEBI" id="CHEBI:132025"/>
    </reaction>
    <physiologicalReaction direction="left-to-right" evidence="2">
        <dbReference type="Rhea" id="RHEA:50089"/>
    </physiologicalReaction>
</comment>
<comment type="catalytic activity">
    <reaction evidence="2">
        <text>dodecanoate + reduced [NADPH--hemoprotein reductase] + O2 = 11-hydroxydodecanoate + oxidized [NADPH--hemoprotein reductase] + H2O + H(+)</text>
        <dbReference type="Rhea" id="RHEA:39751"/>
        <dbReference type="Rhea" id="RHEA-COMP:11964"/>
        <dbReference type="Rhea" id="RHEA-COMP:11965"/>
        <dbReference type="ChEBI" id="CHEBI:15377"/>
        <dbReference type="ChEBI" id="CHEBI:15378"/>
        <dbReference type="ChEBI" id="CHEBI:15379"/>
        <dbReference type="ChEBI" id="CHEBI:18262"/>
        <dbReference type="ChEBI" id="CHEBI:57618"/>
        <dbReference type="ChEBI" id="CHEBI:58210"/>
        <dbReference type="ChEBI" id="CHEBI:76628"/>
    </reaction>
    <physiologicalReaction direction="left-to-right" evidence="2">
        <dbReference type="Rhea" id="RHEA:39752"/>
    </physiologicalReaction>
</comment>
<comment type="catalytic activity">
    <reaction evidence="2">
        <text>tetradecanoate + reduced [NADPH--hemoprotein reductase] + O2 = 13-hydroxytetradecanoate + oxidized [NADPH--hemoprotein reductase] + H2O + H(+)</text>
        <dbReference type="Rhea" id="RHEA:50096"/>
        <dbReference type="Rhea" id="RHEA-COMP:11964"/>
        <dbReference type="Rhea" id="RHEA-COMP:11965"/>
        <dbReference type="ChEBI" id="CHEBI:15377"/>
        <dbReference type="ChEBI" id="CHEBI:15378"/>
        <dbReference type="ChEBI" id="CHEBI:15379"/>
        <dbReference type="ChEBI" id="CHEBI:30807"/>
        <dbReference type="ChEBI" id="CHEBI:57618"/>
        <dbReference type="ChEBI" id="CHEBI:58210"/>
        <dbReference type="ChEBI" id="CHEBI:132031"/>
    </reaction>
    <physiologicalReaction direction="left-to-right" evidence="2">
        <dbReference type="Rhea" id="RHEA:50097"/>
    </physiologicalReaction>
</comment>
<comment type="catalytic activity">
    <reaction evidence="2">
        <text>4-nitrophenol + NADPH + O2 + H(+) = 4-nitrocatechol + NADP(+) + H2O</text>
        <dbReference type="Rhea" id="RHEA:26205"/>
        <dbReference type="ChEBI" id="CHEBI:15377"/>
        <dbReference type="ChEBI" id="CHEBI:15378"/>
        <dbReference type="ChEBI" id="CHEBI:15379"/>
        <dbReference type="ChEBI" id="CHEBI:57730"/>
        <dbReference type="ChEBI" id="CHEBI:57783"/>
        <dbReference type="ChEBI" id="CHEBI:57917"/>
        <dbReference type="ChEBI" id="CHEBI:58349"/>
        <dbReference type="EC" id="1.14.13.n7"/>
    </reaction>
    <physiologicalReaction direction="left-to-right" evidence="2">
        <dbReference type="Rhea" id="RHEA:26206"/>
    </physiologicalReaction>
</comment>
<comment type="cofactor">
    <cofactor evidence="1">
        <name>heme</name>
        <dbReference type="ChEBI" id="CHEBI:30413"/>
    </cofactor>
</comment>
<comment type="activity regulation">
    <text evidence="2">The omega-1 hydroxylase activity is stimulated by cytochrome b5.</text>
</comment>
<comment type="pathway">
    <text evidence="2">Lipid metabolism; fatty acid metabolism.</text>
</comment>
<comment type="subunit">
    <text evidence="3">Interacts with chaperones HSP70 and HSP90; this interaction is required for initial targeting to mitochondria.</text>
</comment>
<comment type="subcellular location">
    <subcellularLocation>
        <location evidence="3">Endoplasmic reticulum membrane</location>
        <topology evidence="3">Peripheral membrane protein</topology>
    </subcellularLocation>
    <subcellularLocation>
        <location evidence="3">Microsome membrane</location>
        <topology evidence="3">Peripheral membrane protein</topology>
    </subcellularLocation>
    <subcellularLocation>
        <location evidence="3">Mitochondrion inner membrane</location>
        <topology evidence="3">Peripheral membrane protein</topology>
    </subcellularLocation>
    <text evidence="3">Post-translationally targeted to mitochondria. TOMM70 is required for the translocation across the mitochondrial outer membrane. After translocation into the matrix, associates with the inner membrane as a membrane extrinsic protein.</text>
</comment>
<comment type="induction">
    <text>By ethanol.</text>
</comment>
<comment type="similarity">
    <text evidence="4">Belongs to the cytochrome P450 family.</text>
</comment>
<keyword id="KW-0256">Endoplasmic reticulum</keyword>
<keyword id="KW-0276">Fatty acid metabolism</keyword>
<keyword id="KW-0349">Heme</keyword>
<keyword id="KW-0408">Iron</keyword>
<keyword id="KW-0443">Lipid metabolism</keyword>
<keyword id="KW-0472">Membrane</keyword>
<keyword id="KW-0479">Metal-binding</keyword>
<keyword id="KW-0492">Microsome</keyword>
<keyword id="KW-0496">Mitochondrion</keyword>
<keyword id="KW-0999">Mitochondrion inner membrane</keyword>
<keyword id="KW-0503">Monooxygenase</keyword>
<keyword id="KW-0521">NADP</keyword>
<keyword id="KW-0560">Oxidoreductase</keyword>
<keyword id="KW-1185">Reference proteome</keyword>
<dbReference type="EC" id="1.14.14.1" evidence="2"/>
<dbReference type="EC" id="1.14.13.n7" evidence="2"/>
<dbReference type="EMBL" id="S55205">
    <property type="protein sequence ID" value="AAB24951.2"/>
    <property type="molecule type" value="mRNA"/>
</dbReference>
<dbReference type="PIR" id="S28167">
    <property type="entry name" value="S28167"/>
</dbReference>
<dbReference type="SMR" id="P33266"/>
<dbReference type="STRING" id="9541.ENSMFAP00000025829"/>
<dbReference type="eggNOG" id="KOG0156">
    <property type="taxonomic scope" value="Eukaryota"/>
</dbReference>
<dbReference type="UniPathway" id="UPA00199"/>
<dbReference type="Proteomes" id="UP000233100">
    <property type="component" value="Unplaced"/>
</dbReference>
<dbReference type="GO" id="GO:0005789">
    <property type="term" value="C:endoplasmic reticulum membrane"/>
    <property type="evidence" value="ECO:0007669"/>
    <property type="project" value="UniProtKB-SubCell"/>
</dbReference>
<dbReference type="GO" id="GO:0005743">
    <property type="term" value="C:mitochondrial inner membrane"/>
    <property type="evidence" value="ECO:0000250"/>
    <property type="project" value="UniProtKB"/>
</dbReference>
<dbReference type="GO" id="GO:0008392">
    <property type="term" value="F:arachidonate epoxygenase activity"/>
    <property type="evidence" value="ECO:0007669"/>
    <property type="project" value="TreeGrafter"/>
</dbReference>
<dbReference type="GO" id="GO:0020037">
    <property type="term" value="F:heme binding"/>
    <property type="evidence" value="ECO:0000250"/>
    <property type="project" value="UniProtKB"/>
</dbReference>
<dbReference type="GO" id="GO:0030544">
    <property type="term" value="F:Hsp70 protein binding"/>
    <property type="evidence" value="ECO:0000250"/>
    <property type="project" value="UniProtKB"/>
</dbReference>
<dbReference type="GO" id="GO:0051879">
    <property type="term" value="F:Hsp90 protein binding"/>
    <property type="evidence" value="ECO:0000250"/>
    <property type="project" value="UniProtKB"/>
</dbReference>
<dbReference type="GO" id="GO:0005506">
    <property type="term" value="F:iron ion binding"/>
    <property type="evidence" value="ECO:0007669"/>
    <property type="project" value="InterPro"/>
</dbReference>
<dbReference type="GO" id="GO:0016712">
    <property type="term" value="F:oxidoreductase activity, acting on paired donors, with incorporation or reduction of molecular oxygen, reduced flavin or flavoprotein as one donor, and incorporation of one atom of oxygen"/>
    <property type="evidence" value="ECO:0007669"/>
    <property type="project" value="UniProtKB-EC"/>
</dbReference>
<dbReference type="GO" id="GO:0019373">
    <property type="term" value="P:epoxygenase P450 pathway"/>
    <property type="evidence" value="ECO:0007669"/>
    <property type="project" value="TreeGrafter"/>
</dbReference>
<dbReference type="GO" id="GO:0006805">
    <property type="term" value="P:xenobiotic metabolic process"/>
    <property type="evidence" value="ECO:0007669"/>
    <property type="project" value="TreeGrafter"/>
</dbReference>
<dbReference type="CDD" id="cd20665">
    <property type="entry name" value="CYP2C-like"/>
    <property type="match status" value="1"/>
</dbReference>
<dbReference type="FunFam" id="1.10.630.10:FF:000238">
    <property type="entry name" value="Cytochrome P450 2A6"/>
    <property type="match status" value="1"/>
</dbReference>
<dbReference type="Gene3D" id="1.10.630.10">
    <property type="entry name" value="Cytochrome P450"/>
    <property type="match status" value="1"/>
</dbReference>
<dbReference type="InterPro" id="IPR001128">
    <property type="entry name" value="Cyt_P450"/>
</dbReference>
<dbReference type="InterPro" id="IPR017972">
    <property type="entry name" value="Cyt_P450_CS"/>
</dbReference>
<dbReference type="InterPro" id="IPR002401">
    <property type="entry name" value="Cyt_P450_E_grp-I"/>
</dbReference>
<dbReference type="InterPro" id="IPR008070">
    <property type="entry name" value="Cyt_P450_E_grp-I_CYP2E-like"/>
</dbReference>
<dbReference type="InterPro" id="IPR036396">
    <property type="entry name" value="Cyt_P450_sf"/>
</dbReference>
<dbReference type="InterPro" id="IPR050182">
    <property type="entry name" value="Cytochrome_P450_fam2"/>
</dbReference>
<dbReference type="PANTHER" id="PTHR24300:SF356">
    <property type="entry name" value="CYTOCHROME P450 2E1"/>
    <property type="match status" value="1"/>
</dbReference>
<dbReference type="PANTHER" id="PTHR24300">
    <property type="entry name" value="CYTOCHROME P450 508A4-RELATED"/>
    <property type="match status" value="1"/>
</dbReference>
<dbReference type="Pfam" id="PF00067">
    <property type="entry name" value="p450"/>
    <property type="match status" value="1"/>
</dbReference>
<dbReference type="PRINTS" id="PR00463">
    <property type="entry name" value="EP450I"/>
</dbReference>
<dbReference type="PRINTS" id="PR01687">
    <property type="entry name" value="EP450ICYP2E"/>
</dbReference>
<dbReference type="PRINTS" id="PR00385">
    <property type="entry name" value="P450"/>
</dbReference>
<dbReference type="SUPFAM" id="SSF48264">
    <property type="entry name" value="Cytochrome P450"/>
    <property type="match status" value="1"/>
</dbReference>
<dbReference type="PROSITE" id="PS00086">
    <property type="entry name" value="CYTOCHROME_P450"/>
    <property type="match status" value="1"/>
</dbReference>
<reference key="1">
    <citation type="journal article" date="1992" name="Biochim. Biophys. Acta">
        <title>Molecular cloning of monkey liver cytochrome P-450 cDNAs: similarity of the primary sequences to human cytochromes P-450.</title>
        <authorList>
            <person name="Komori M."/>
            <person name="Kikuchi O."/>
            <person name="Sakuma T."/>
            <person name="Funaki J."/>
            <person name="Kitada M."/>
            <person name="Kamataki T."/>
        </authorList>
    </citation>
    <scope>NUCLEOTIDE SEQUENCE [MRNA]</scope>
    <source>
        <tissue>Liver</tissue>
    </source>
</reference>
<evidence type="ECO:0000250" key="1"/>
<evidence type="ECO:0000250" key="2">
    <source>
        <dbReference type="UniProtKB" id="P05181"/>
    </source>
</evidence>
<evidence type="ECO:0000250" key="3">
    <source>
        <dbReference type="UniProtKB" id="P05182"/>
    </source>
</evidence>
<evidence type="ECO:0000305" key="4"/>
<protein>
    <recommendedName>
        <fullName>Cytochrome P450 2E1</fullName>
        <ecNumber evidence="2">1.14.14.1</ecNumber>
    </recommendedName>
    <alternativeName>
        <fullName>4-nitrophenol 2-hydroxylase</fullName>
        <ecNumber evidence="2">1.14.13.n7</ecNumber>
    </alternativeName>
    <alternativeName>
        <fullName>CYPIIE1</fullName>
    </alternativeName>
    <alternativeName>
        <fullName>Cytochrome P450-MKJ1</fullName>
    </alternativeName>
</protein>
<gene>
    <name type="primary">CYP2E1</name>
    <name type="synonym">CYP2E</name>
</gene>
<sequence>LFQLELKNIPKSFTRLAQRFGPVFTLYVGSRRVVVVHGIKAVKEVLPGPQGRVLGQRRHPAFHAHRDRGIIFNNGPTWKDIRRFSLTTLRNYGMGKQGNESRIQREAHFLLEALRKTQGQPFDPTFLIGCAPCNVIADILFRKRFDYNDEKFLRLMYLFNENFQGLSCPWLQLYNNFPSLLHYLPGSHRKVMKNVAEIKEYVSERVKEHHQSLDPNCPRDLTDCLLVEMEKEKHSAERLYTMDGITVTVADLFFAGTETTSTTLRYGLLILMKYPEIEEKLHEEIDRVIGPSRIPAIKDRQEMPYMHAVVHEIQRFITLVPSNLPHEATRDTIFRGYIIPKGTVIVPTLDSVLYHNQEFPDPEKFKPEHLVDESGKFKYSDYFKPFSAGKRVCAGEGLARMELFLLLSAILQHFNLKPLVDPKDIDISPVNIGFGCIPPRFKLCVIPRS</sequence>
<proteinExistence type="evidence at transcript level"/>
<name>CP2E1_MACFA</name>
<accession>P33266</accession>
<organism>
    <name type="scientific">Macaca fascicularis</name>
    <name type="common">Crab-eating macaque</name>
    <name type="synonym">Cynomolgus monkey</name>
    <dbReference type="NCBI Taxonomy" id="9541"/>
    <lineage>
        <taxon>Eukaryota</taxon>
        <taxon>Metazoa</taxon>
        <taxon>Chordata</taxon>
        <taxon>Craniata</taxon>
        <taxon>Vertebrata</taxon>
        <taxon>Euteleostomi</taxon>
        <taxon>Mammalia</taxon>
        <taxon>Eutheria</taxon>
        <taxon>Euarchontoglires</taxon>
        <taxon>Primates</taxon>
        <taxon>Haplorrhini</taxon>
        <taxon>Catarrhini</taxon>
        <taxon>Cercopithecidae</taxon>
        <taxon>Cercopithecinae</taxon>
        <taxon>Macaca</taxon>
    </lineage>
</organism>
<feature type="chain" id="PRO_0000051752" description="Cytochrome P450 2E1">
    <location>
        <begin position="1" status="less than"/>
        <end position="449"/>
    </location>
</feature>
<feature type="binding site" evidence="1">
    <location>
        <begin position="254"/>
        <end position="259"/>
    </location>
    <ligand>
        <name>substrate</name>
    </ligand>
</feature>
<feature type="binding site" description="axial binding residue" evidence="1">
    <location>
        <position position="393"/>
    </location>
    <ligand>
        <name>heme</name>
        <dbReference type="ChEBI" id="CHEBI:30413"/>
    </ligand>
    <ligandPart>
        <name>Fe</name>
        <dbReference type="ChEBI" id="CHEBI:18248"/>
    </ligandPart>
</feature>
<feature type="non-terminal residue">
    <location>
        <position position="1"/>
    </location>
</feature>